<reference key="1">
    <citation type="journal article" date="2007" name="J. Bacteriol.">
        <title>The genome sequence of avian pathogenic Escherichia coli strain O1:K1:H7 shares strong similarities with human extraintestinal pathogenic E. coli genomes.</title>
        <authorList>
            <person name="Johnson T.J."/>
            <person name="Kariyawasam S."/>
            <person name="Wannemuehler Y."/>
            <person name="Mangiamele P."/>
            <person name="Johnson S.J."/>
            <person name="Doetkott C."/>
            <person name="Skyberg J.A."/>
            <person name="Lynne A.M."/>
            <person name="Johnson J.R."/>
            <person name="Nolan L.K."/>
        </authorList>
    </citation>
    <scope>NUCLEOTIDE SEQUENCE [LARGE SCALE GENOMIC DNA]</scope>
</reference>
<name>PIMT_ECOK1</name>
<protein>
    <recommendedName>
        <fullName evidence="1">Protein-L-isoaspartate O-methyltransferase</fullName>
        <ecNumber evidence="1">2.1.1.77</ecNumber>
    </recommendedName>
    <alternativeName>
        <fullName evidence="1">L-isoaspartyl protein carboxyl methyltransferase</fullName>
    </alternativeName>
    <alternativeName>
        <fullName evidence="1">Protein L-isoaspartyl methyltransferase</fullName>
    </alternativeName>
    <alternativeName>
        <fullName evidence="1">Protein-beta-aspartate methyltransferase</fullName>
        <shortName evidence="1">PIMT</shortName>
    </alternativeName>
</protein>
<proteinExistence type="inferred from homology"/>
<evidence type="ECO:0000255" key="1">
    <source>
        <dbReference type="HAMAP-Rule" id="MF_00090"/>
    </source>
</evidence>
<dbReference type="EC" id="2.1.1.77" evidence="1"/>
<dbReference type="EMBL" id="CP000468">
    <property type="protein sequence ID" value="ABJ02177.1"/>
    <property type="molecule type" value="Genomic_DNA"/>
</dbReference>
<dbReference type="RefSeq" id="WP_000254701.1">
    <property type="nucleotide sequence ID" value="NZ_CADILS010000024.1"/>
</dbReference>
<dbReference type="SMR" id="A1AET7"/>
<dbReference type="KEGG" id="ecv:APECO1_3780"/>
<dbReference type="HOGENOM" id="CLU_055432_2_0_6"/>
<dbReference type="Proteomes" id="UP000008216">
    <property type="component" value="Chromosome"/>
</dbReference>
<dbReference type="GO" id="GO:0005737">
    <property type="term" value="C:cytoplasm"/>
    <property type="evidence" value="ECO:0007669"/>
    <property type="project" value="UniProtKB-SubCell"/>
</dbReference>
<dbReference type="GO" id="GO:0004719">
    <property type="term" value="F:protein-L-isoaspartate (D-aspartate) O-methyltransferase activity"/>
    <property type="evidence" value="ECO:0007669"/>
    <property type="project" value="UniProtKB-UniRule"/>
</dbReference>
<dbReference type="GO" id="GO:0032259">
    <property type="term" value="P:methylation"/>
    <property type="evidence" value="ECO:0007669"/>
    <property type="project" value="UniProtKB-KW"/>
</dbReference>
<dbReference type="GO" id="GO:0036211">
    <property type="term" value="P:protein modification process"/>
    <property type="evidence" value="ECO:0007669"/>
    <property type="project" value="UniProtKB-UniRule"/>
</dbReference>
<dbReference type="GO" id="GO:0030091">
    <property type="term" value="P:protein repair"/>
    <property type="evidence" value="ECO:0007669"/>
    <property type="project" value="UniProtKB-UniRule"/>
</dbReference>
<dbReference type="CDD" id="cd02440">
    <property type="entry name" value="AdoMet_MTases"/>
    <property type="match status" value="1"/>
</dbReference>
<dbReference type="FunFam" id="3.40.50.150:FF:000010">
    <property type="entry name" value="Protein-L-isoaspartate O-methyltransferase"/>
    <property type="match status" value="1"/>
</dbReference>
<dbReference type="Gene3D" id="3.40.50.150">
    <property type="entry name" value="Vaccinia Virus protein VP39"/>
    <property type="match status" value="1"/>
</dbReference>
<dbReference type="HAMAP" id="MF_00090">
    <property type="entry name" value="PIMT"/>
    <property type="match status" value="1"/>
</dbReference>
<dbReference type="InterPro" id="IPR000682">
    <property type="entry name" value="PCMT"/>
</dbReference>
<dbReference type="InterPro" id="IPR029063">
    <property type="entry name" value="SAM-dependent_MTases_sf"/>
</dbReference>
<dbReference type="NCBIfam" id="TIGR00080">
    <property type="entry name" value="pimt"/>
    <property type="match status" value="1"/>
</dbReference>
<dbReference type="NCBIfam" id="NF001453">
    <property type="entry name" value="PRK00312.1"/>
    <property type="match status" value="1"/>
</dbReference>
<dbReference type="PANTHER" id="PTHR11579">
    <property type="entry name" value="PROTEIN-L-ISOASPARTATE O-METHYLTRANSFERASE"/>
    <property type="match status" value="1"/>
</dbReference>
<dbReference type="PANTHER" id="PTHR11579:SF0">
    <property type="entry name" value="PROTEIN-L-ISOASPARTATE(D-ASPARTATE) O-METHYLTRANSFERASE"/>
    <property type="match status" value="1"/>
</dbReference>
<dbReference type="Pfam" id="PF01135">
    <property type="entry name" value="PCMT"/>
    <property type="match status" value="1"/>
</dbReference>
<dbReference type="SUPFAM" id="SSF53335">
    <property type="entry name" value="S-adenosyl-L-methionine-dependent methyltransferases"/>
    <property type="match status" value="1"/>
</dbReference>
<dbReference type="PROSITE" id="PS01279">
    <property type="entry name" value="PCMT"/>
    <property type="match status" value="1"/>
</dbReference>
<accession>A1AET7</accession>
<gene>
    <name evidence="1" type="primary">pcm</name>
    <name type="ordered locus">Ecok1_26830</name>
    <name type="ORF">APECO1_3780</name>
</gene>
<comment type="function">
    <text evidence="1">Catalyzes the methyl esterification of L-isoaspartyl residues in peptides and proteins that result from spontaneous decomposition of normal L-aspartyl and L-asparaginyl residues. It plays a role in the repair and/or degradation of damaged proteins.</text>
</comment>
<comment type="catalytic activity">
    <reaction evidence="1">
        <text>[protein]-L-isoaspartate + S-adenosyl-L-methionine = [protein]-L-isoaspartate alpha-methyl ester + S-adenosyl-L-homocysteine</text>
        <dbReference type="Rhea" id="RHEA:12705"/>
        <dbReference type="Rhea" id="RHEA-COMP:12143"/>
        <dbReference type="Rhea" id="RHEA-COMP:12144"/>
        <dbReference type="ChEBI" id="CHEBI:57856"/>
        <dbReference type="ChEBI" id="CHEBI:59789"/>
        <dbReference type="ChEBI" id="CHEBI:90596"/>
        <dbReference type="ChEBI" id="CHEBI:90598"/>
        <dbReference type="EC" id="2.1.1.77"/>
    </reaction>
</comment>
<comment type="subcellular location">
    <subcellularLocation>
        <location evidence="1">Cytoplasm</location>
    </subcellularLocation>
</comment>
<comment type="similarity">
    <text evidence="1">Belongs to the methyltransferase superfamily. L-isoaspartyl/D-aspartyl protein methyltransferase family.</text>
</comment>
<sequence length="208" mass="23243">MVSRRVQALLDQLRAQGIQDELVLNALAAVPREKFVDEAFEQKAWDNIALPIGQGQTISQPYMVARMTELLELTPQSRVLEIGTGSGYQTAILAHLVQHVCSVERIKGLQWQARRRLKNLDLHNVSTRHGDGWQGWQARAPFDAIIVTAAPPEIPTALMTQLDEGGILVLPVGEEHQYLKRVRRRGGEFIIDTVEAVRFVPLVKGELA</sequence>
<organism>
    <name type="scientific">Escherichia coli O1:K1 / APEC</name>
    <dbReference type="NCBI Taxonomy" id="405955"/>
    <lineage>
        <taxon>Bacteria</taxon>
        <taxon>Pseudomonadati</taxon>
        <taxon>Pseudomonadota</taxon>
        <taxon>Gammaproteobacteria</taxon>
        <taxon>Enterobacterales</taxon>
        <taxon>Enterobacteriaceae</taxon>
        <taxon>Escherichia</taxon>
    </lineage>
</organism>
<feature type="chain" id="PRO_1000004816" description="Protein-L-isoaspartate O-methyltransferase">
    <location>
        <begin position="1"/>
        <end position="208"/>
    </location>
</feature>
<feature type="active site" evidence="1">
    <location>
        <position position="59"/>
    </location>
</feature>
<keyword id="KW-0963">Cytoplasm</keyword>
<keyword id="KW-0489">Methyltransferase</keyword>
<keyword id="KW-1185">Reference proteome</keyword>
<keyword id="KW-0949">S-adenosyl-L-methionine</keyword>
<keyword id="KW-0808">Transferase</keyword>